<feature type="chain" id="PRO_0000137346" description="Small ribosomal subunit protein eS6">
    <location>
        <begin position="1"/>
        <end position="131"/>
    </location>
</feature>
<sequence length="131" mass="13743">MATFQVAVADPESGRTYQFEVDGQDANRFIGREIGAAVDGGAVGLDGYTVEITGGSDDAGRPMREDVDGSDLMEVLLEGGAGFNPDEDGERKRVTVRGKEVSEAVAQLNVAIDEHGEEPVAELLGADGDDE</sequence>
<keyword id="KW-1185">Reference proteome</keyword>
<keyword id="KW-0687">Ribonucleoprotein</keyword>
<keyword id="KW-0689">Ribosomal protein</keyword>
<organism>
    <name type="scientific">Halobacterium salinarum (strain ATCC 700922 / JCM 11081 / NRC-1)</name>
    <name type="common">Halobacterium halobium</name>
    <dbReference type="NCBI Taxonomy" id="64091"/>
    <lineage>
        <taxon>Archaea</taxon>
        <taxon>Methanobacteriati</taxon>
        <taxon>Methanobacteriota</taxon>
        <taxon>Stenosarchaea group</taxon>
        <taxon>Halobacteria</taxon>
        <taxon>Halobacteriales</taxon>
        <taxon>Halobacteriaceae</taxon>
        <taxon>Halobacterium</taxon>
        <taxon>Halobacterium salinarum NRC-34001</taxon>
    </lineage>
</organism>
<reference key="1">
    <citation type="journal article" date="2000" name="Proc. Natl. Acad. Sci. U.S.A.">
        <title>Genome sequence of Halobacterium species NRC-1.</title>
        <authorList>
            <person name="Ng W.V."/>
            <person name="Kennedy S.P."/>
            <person name="Mahairas G.G."/>
            <person name="Berquist B."/>
            <person name="Pan M."/>
            <person name="Shukla H.D."/>
            <person name="Lasky S.R."/>
            <person name="Baliga N.S."/>
            <person name="Thorsson V."/>
            <person name="Sbrogna J."/>
            <person name="Swartzell S."/>
            <person name="Weir D."/>
            <person name="Hall J."/>
            <person name="Dahl T.A."/>
            <person name="Welti R."/>
            <person name="Goo Y.A."/>
            <person name="Leithauser B."/>
            <person name="Keller K."/>
            <person name="Cruz R."/>
            <person name="Danson M.J."/>
            <person name="Hough D.W."/>
            <person name="Maddocks D.G."/>
            <person name="Jablonski P.E."/>
            <person name="Krebs M.P."/>
            <person name="Angevine C.M."/>
            <person name="Dale H."/>
            <person name="Isenbarger T.A."/>
            <person name="Peck R.F."/>
            <person name="Pohlschroder M."/>
            <person name="Spudich J.L."/>
            <person name="Jung K.-H."/>
            <person name="Alam M."/>
            <person name="Freitas T."/>
            <person name="Hou S."/>
            <person name="Daniels C.J."/>
            <person name="Dennis P.P."/>
            <person name="Omer A.D."/>
            <person name="Ebhardt H."/>
            <person name="Lowe T.M."/>
            <person name="Liang P."/>
            <person name="Riley M."/>
            <person name="Hood L."/>
            <person name="DasSarma S."/>
        </authorList>
    </citation>
    <scope>NUCLEOTIDE SEQUENCE [LARGE SCALE GENOMIC DNA]</scope>
    <source>
        <strain>ATCC 700922 / JCM 11081 / NRC-1</strain>
    </source>
</reference>
<comment type="similarity">
    <text evidence="1">Belongs to the eukaryotic ribosomal protein eS6 family.</text>
</comment>
<proteinExistence type="inferred from homology"/>
<name>RS6E_HALSA</name>
<gene>
    <name evidence="1" type="primary">rps6e</name>
    <name type="ordered locus">VNG_2514G</name>
</gene>
<dbReference type="EMBL" id="AE004437">
    <property type="protein sequence ID" value="AAG20576.1"/>
    <property type="molecule type" value="Genomic_DNA"/>
</dbReference>
<dbReference type="PIR" id="D84401">
    <property type="entry name" value="D84401"/>
</dbReference>
<dbReference type="RefSeq" id="WP_010903878.1">
    <property type="nucleotide sequence ID" value="NC_002607.1"/>
</dbReference>
<dbReference type="SMR" id="Q9HMJ5"/>
<dbReference type="FunCoup" id="Q9HMJ5">
    <property type="interactions" value="111"/>
</dbReference>
<dbReference type="STRING" id="64091.VNG_2514G"/>
<dbReference type="PaxDb" id="64091-VNG_2514G"/>
<dbReference type="KEGG" id="hal:VNG_2514G"/>
<dbReference type="PATRIC" id="fig|64091.14.peg.1948"/>
<dbReference type="HOGENOM" id="CLU_109671_1_1_2"/>
<dbReference type="InParanoid" id="Q9HMJ5"/>
<dbReference type="OrthoDB" id="7793at2157"/>
<dbReference type="PhylomeDB" id="Q9HMJ5"/>
<dbReference type="Proteomes" id="UP000000554">
    <property type="component" value="Chromosome"/>
</dbReference>
<dbReference type="GO" id="GO:1990904">
    <property type="term" value="C:ribonucleoprotein complex"/>
    <property type="evidence" value="ECO:0007669"/>
    <property type="project" value="UniProtKB-KW"/>
</dbReference>
<dbReference type="GO" id="GO:0005840">
    <property type="term" value="C:ribosome"/>
    <property type="evidence" value="ECO:0007669"/>
    <property type="project" value="UniProtKB-KW"/>
</dbReference>
<dbReference type="GO" id="GO:0003735">
    <property type="term" value="F:structural constituent of ribosome"/>
    <property type="evidence" value="ECO:0007669"/>
    <property type="project" value="InterPro"/>
</dbReference>
<dbReference type="GO" id="GO:0006412">
    <property type="term" value="P:translation"/>
    <property type="evidence" value="ECO:0007669"/>
    <property type="project" value="UniProtKB-UniRule"/>
</dbReference>
<dbReference type="HAMAP" id="MF_00512">
    <property type="entry name" value="Ribosomal_eS6"/>
    <property type="match status" value="1"/>
</dbReference>
<dbReference type="InterPro" id="IPR001377">
    <property type="entry name" value="Ribosomal_eS6"/>
</dbReference>
<dbReference type="InterPro" id="IPR020924">
    <property type="entry name" value="Ribosomal_eS6_arc"/>
</dbReference>
<dbReference type="InterPro" id="IPR018282">
    <property type="entry name" value="Ribosomal_eS6_CS"/>
</dbReference>
<dbReference type="NCBIfam" id="NF003294">
    <property type="entry name" value="PRK04290.1-3"/>
    <property type="match status" value="1"/>
</dbReference>
<dbReference type="PANTHER" id="PTHR11502">
    <property type="entry name" value="40S RIBOSOMAL PROTEIN S6"/>
    <property type="match status" value="1"/>
</dbReference>
<dbReference type="Pfam" id="PF01092">
    <property type="entry name" value="Ribosomal_S6e"/>
    <property type="match status" value="1"/>
</dbReference>
<dbReference type="SMART" id="SM01405">
    <property type="entry name" value="Ribosomal_S6e"/>
    <property type="match status" value="1"/>
</dbReference>
<dbReference type="PROSITE" id="PS00578">
    <property type="entry name" value="RIBOSOMAL_S6E"/>
    <property type="match status" value="1"/>
</dbReference>
<evidence type="ECO:0000255" key="1">
    <source>
        <dbReference type="HAMAP-Rule" id="MF_00512"/>
    </source>
</evidence>
<evidence type="ECO:0000305" key="2"/>
<accession>Q9HMJ5</accession>
<protein>
    <recommendedName>
        <fullName evidence="1">Small ribosomal subunit protein eS6</fullName>
    </recommendedName>
    <alternativeName>
        <fullName evidence="2">30S ribosomal protein S6e</fullName>
    </alternativeName>
</protein>